<proteinExistence type="evidence at protein level"/>
<name>PG161_VACCC</name>
<accession>P68616</accession>
<accession>P21056</accession>
<dbReference type="EMBL" id="M35027">
    <property type="protein sequence ID" value="AAA48160.1"/>
    <property type="molecule type" value="Genomic_DNA"/>
</dbReference>
<dbReference type="PIR" id="H42520">
    <property type="entry name" value="H42520"/>
</dbReference>
<dbReference type="SMR" id="P68616"/>
<dbReference type="Proteomes" id="UP000008269">
    <property type="component" value="Segment"/>
</dbReference>
<dbReference type="GO" id="GO:0033644">
    <property type="term" value="C:host cell membrane"/>
    <property type="evidence" value="ECO:0007669"/>
    <property type="project" value="UniProtKB-SubCell"/>
</dbReference>
<dbReference type="GO" id="GO:0016020">
    <property type="term" value="C:membrane"/>
    <property type="evidence" value="ECO:0007669"/>
    <property type="project" value="UniProtKB-KW"/>
</dbReference>
<dbReference type="GO" id="GO:0019031">
    <property type="term" value="C:viral envelope"/>
    <property type="evidence" value="ECO:0007669"/>
    <property type="project" value="UniProtKB-KW"/>
</dbReference>
<dbReference type="GO" id="GO:0055036">
    <property type="term" value="C:virion membrane"/>
    <property type="evidence" value="ECO:0007669"/>
    <property type="project" value="UniProtKB-SubCell"/>
</dbReference>
<dbReference type="Gene3D" id="3.10.100.10">
    <property type="entry name" value="Mannose-Binding Protein A, subunit A"/>
    <property type="match status" value="1"/>
</dbReference>
<dbReference type="InterPro" id="IPR016186">
    <property type="entry name" value="C-type_lectin-like/link_sf"/>
</dbReference>
<dbReference type="InterPro" id="IPR009238">
    <property type="entry name" value="Chordopox_A33R"/>
</dbReference>
<dbReference type="Pfam" id="PF05966">
    <property type="entry name" value="Chordopox_A33R"/>
    <property type="match status" value="1"/>
</dbReference>
<evidence type="ECO:0000250" key="1"/>
<evidence type="ECO:0000250" key="2">
    <source>
        <dbReference type="UniProtKB" id="P68617"/>
    </source>
</evidence>
<evidence type="ECO:0000255" key="3"/>
<evidence type="ECO:0000305" key="4"/>
<reference key="1">
    <citation type="journal article" date="1990" name="Virology">
        <title>The complete DNA sequence of vaccinia virus.</title>
        <authorList>
            <person name="Goebel S.J."/>
            <person name="Johnson G.P."/>
            <person name="Perkus M.E."/>
            <person name="Davis S.W."/>
            <person name="Winslow J.P."/>
            <person name="Paoletti E."/>
        </authorList>
    </citation>
    <scope>NUCLEOTIDE SEQUENCE [LARGE SCALE GENOMIC DNA]</scope>
</reference>
<reference key="2">
    <citation type="journal article" date="1990" name="Virology">
        <title>Appendix to 'The complete DNA sequence of vaccinia virus'.</title>
        <authorList>
            <person name="Goebel S.J."/>
            <person name="Johnson G.P."/>
            <person name="Perkus M.E."/>
            <person name="Davis S.W."/>
            <person name="Winslow J.P."/>
            <person name="Paoletti E."/>
        </authorList>
    </citation>
    <scope>NUCLEOTIDE SEQUENCE [LARGE SCALE GENOMIC DNA]</scope>
</reference>
<sequence length="185" mass="20506">MMTPENDEEQTSVFSATVYGDKIQGKNKRKRVIGLCIRISMVISLLSMITMSAFLIVRLNQCMSANEAAITDAAVAVAAASSTHRKVASSTTQYDHKESCNGLYYQGSCYILHSDYQLFSDAKANCTAESSTLPNKSDVLITWLIDYVEDTWGSDGNPITKTTSDYQDSDVSQEVRKYFCVKTMN</sequence>
<gene>
    <name type="primary">OPG161</name>
    <name type="ORF">A33R</name>
</gene>
<protein>
    <recommendedName>
        <fullName>Protein OPG161</fullName>
    </recommendedName>
</protein>
<feature type="chain" id="PRO_0000099316" description="Protein OPG161">
    <location>
        <begin position="1"/>
        <end position="185"/>
    </location>
</feature>
<feature type="topological domain" description="Intravirion" evidence="1">
    <location>
        <begin position="1"/>
        <end position="33"/>
    </location>
</feature>
<feature type="transmembrane region" description="Helical" evidence="3">
    <location>
        <begin position="34"/>
        <end position="56"/>
    </location>
</feature>
<feature type="topological domain" description="Virion surface" evidence="1">
    <location>
        <begin position="57"/>
        <end position="185"/>
    </location>
</feature>
<feature type="region of interest" description="C-type lectin-like domain">
    <location>
        <begin position="98"/>
        <end position="185"/>
    </location>
</feature>
<feature type="glycosylation site" description="N-linked (GlcNAc...) asparagine; by host" evidence="3">
    <location>
        <position position="125"/>
    </location>
</feature>
<feature type="glycosylation site" description="N-linked (GlcNAc...) asparagine; by host" evidence="3">
    <location>
        <position position="135"/>
    </location>
</feature>
<feature type="disulfide bond" description="Interchain">
    <location>
        <position position="62"/>
    </location>
</feature>
<organismHost>
    <name type="scientific">Homo sapiens</name>
    <name type="common">Human</name>
    <dbReference type="NCBI Taxonomy" id="9606"/>
</organismHost>
<comment type="function">
    <text evidence="2">Forms a complex with OPG162 and OPG190 to coordinate the incorporation of OPG164 into wrapped enveloped virion (EV) membranes and, subsequently, the production of actin tails. Therefore plays an essential role in efficient cell-to-cell spread of viral particles.</text>
</comment>
<comment type="subunit">
    <text evidence="2">Homodimer, disulfide-linked. Interacts with protein OPG190. Interacts (via C-terminus) with protein OPG164. Interacts with OPG162.</text>
</comment>
<comment type="subcellular location">
    <subcellularLocation>
        <location evidence="2">Virion membrane</location>
        <topology evidence="2">Single-pass type II membrane protein</topology>
    </subcellularLocation>
    <subcellularLocation>
        <location evidence="2">Host membrane</location>
        <topology evidence="2">Single-pass type II membrane protein</topology>
    </subcellularLocation>
    <text evidence="2">Component of the enveloped virion (EV) membrane.</text>
</comment>
<comment type="similarity">
    <text evidence="4">Belongs to the orthopoxvirus OPG161 family.</text>
</comment>
<organism>
    <name type="scientific">Vaccinia virus (strain Copenhagen)</name>
    <name type="common">VACV</name>
    <dbReference type="NCBI Taxonomy" id="10249"/>
    <lineage>
        <taxon>Viruses</taxon>
        <taxon>Varidnaviria</taxon>
        <taxon>Bamfordvirae</taxon>
        <taxon>Nucleocytoviricota</taxon>
        <taxon>Pokkesviricetes</taxon>
        <taxon>Chitovirales</taxon>
        <taxon>Poxviridae</taxon>
        <taxon>Chordopoxvirinae</taxon>
        <taxon>Orthopoxvirus</taxon>
        <taxon>Vaccinia virus</taxon>
    </lineage>
</organism>
<keyword id="KW-1015">Disulfide bond</keyword>
<keyword id="KW-0325">Glycoprotein</keyword>
<keyword id="KW-1043">Host membrane</keyword>
<keyword id="KW-0472">Membrane</keyword>
<keyword id="KW-1185">Reference proteome</keyword>
<keyword id="KW-0735">Signal-anchor</keyword>
<keyword id="KW-0812">Transmembrane</keyword>
<keyword id="KW-1133">Transmembrane helix</keyword>
<keyword id="KW-0261">Viral envelope protein</keyword>
<keyword id="KW-0946">Virion</keyword>